<comment type="function">
    <text evidence="1">The alpha subunit is responsible for the aldol cleavage of indoleglycerol phosphate to indole and glyceraldehyde 3-phosphate.</text>
</comment>
<comment type="catalytic activity">
    <reaction evidence="1">
        <text>(1S,2R)-1-C-(indol-3-yl)glycerol 3-phosphate + L-serine = D-glyceraldehyde 3-phosphate + L-tryptophan + H2O</text>
        <dbReference type="Rhea" id="RHEA:10532"/>
        <dbReference type="ChEBI" id="CHEBI:15377"/>
        <dbReference type="ChEBI" id="CHEBI:33384"/>
        <dbReference type="ChEBI" id="CHEBI:57912"/>
        <dbReference type="ChEBI" id="CHEBI:58866"/>
        <dbReference type="ChEBI" id="CHEBI:59776"/>
        <dbReference type="EC" id="4.2.1.20"/>
    </reaction>
</comment>
<comment type="pathway">
    <text evidence="1">Amino-acid biosynthesis; L-tryptophan biosynthesis; L-tryptophan from chorismate: step 5/5.</text>
</comment>
<comment type="subunit">
    <text evidence="1">Tetramer of two alpha and two beta chains.</text>
</comment>
<comment type="similarity">
    <text evidence="1">Belongs to the TrpA family.</text>
</comment>
<comment type="sequence caution" evidence="2">
    <conflict type="erroneous initiation">
        <sequence resource="EMBL-CDS" id="CAA90308"/>
    </conflict>
</comment>
<keyword id="KW-0002">3D-structure</keyword>
<keyword id="KW-0028">Amino-acid biosynthesis</keyword>
<keyword id="KW-0057">Aromatic amino acid biosynthesis</keyword>
<keyword id="KW-0456">Lyase</keyword>
<keyword id="KW-1185">Reference proteome</keyword>
<keyword id="KW-0822">Tryptophan biosynthesis</keyword>
<proteinExistence type="evidence at protein level"/>
<name>TRPA_SACS2</name>
<accession>P50382</accession>
<dbReference type="EC" id="4.2.1.20" evidence="1"/>
<dbReference type="EMBL" id="Z50014">
    <property type="protein sequence ID" value="CAA90308.1"/>
    <property type="status" value="ALT_INIT"/>
    <property type="molecule type" value="Genomic_DNA"/>
</dbReference>
<dbReference type="EMBL" id="AE006641">
    <property type="protein sequence ID" value="AAK41172.1"/>
    <property type="molecule type" value="Genomic_DNA"/>
</dbReference>
<dbReference type="PIR" id="E90239">
    <property type="entry name" value="E90239"/>
</dbReference>
<dbReference type="RefSeq" id="WP_009992303.1">
    <property type="nucleotide sequence ID" value="NC_002754.1"/>
</dbReference>
<dbReference type="PDB" id="5N2P">
    <property type="method" value="X-ray"/>
    <property type="resolution" value="2.06 A"/>
    <property type="chains" value="A=4-244"/>
</dbReference>
<dbReference type="PDB" id="6HUL">
    <property type="method" value="X-ray"/>
    <property type="resolution" value="2.55 A"/>
    <property type="chains" value="A=4-244"/>
</dbReference>
<dbReference type="PDBsum" id="5N2P"/>
<dbReference type="PDBsum" id="6HUL"/>
<dbReference type="SMR" id="P50382"/>
<dbReference type="FunCoup" id="P50382">
    <property type="interactions" value="126"/>
</dbReference>
<dbReference type="STRING" id="273057.SSO0889"/>
<dbReference type="PaxDb" id="273057-SSO0889"/>
<dbReference type="EnsemblBacteria" id="AAK41172">
    <property type="protein sequence ID" value="AAK41172"/>
    <property type="gene ID" value="SSO0889"/>
</dbReference>
<dbReference type="GeneID" id="44129820"/>
<dbReference type="KEGG" id="sso:SSO0889"/>
<dbReference type="PATRIC" id="fig|273057.12.peg.893"/>
<dbReference type="eggNOG" id="arCOG01086">
    <property type="taxonomic scope" value="Archaea"/>
</dbReference>
<dbReference type="HOGENOM" id="CLU_016734_0_2_2"/>
<dbReference type="InParanoid" id="P50382"/>
<dbReference type="PhylomeDB" id="P50382"/>
<dbReference type="UniPathway" id="UPA00035">
    <property type="reaction ID" value="UER00044"/>
</dbReference>
<dbReference type="Proteomes" id="UP000001974">
    <property type="component" value="Chromosome"/>
</dbReference>
<dbReference type="GO" id="GO:0005829">
    <property type="term" value="C:cytosol"/>
    <property type="evidence" value="ECO:0000318"/>
    <property type="project" value="GO_Central"/>
</dbReference>
<dbReference type="GO" id="GO:0004834">
    <property type="term" value="F:tryptophan synthase activity"/>
    <property type="evidence" value="ECO:0000318"/>
    <property type="project" value="GO_Central"/>
</dbReference>
<dbReference type="GO" id="GO:0000162">
    <property type="term" value="P:L-tryptophan biosynthetic process"/>
    <property type="evidence" value="ECO:0000318"/>
    <property type="project" value="GO_Central"/>
</dbReference>
<dbReference type="CDD" id="cd04724">
    <property type="entry name" value="Tryptophan_synthase_alpha"/>
    <property type="match status" value="1"/>
</dbReference>
<dbReference type="Gene3D" id="3.20.20.70">
    <property type="entry name" value="Aldolase class I"/>
    <property type="match status" value="1"/>
</dbReference>
<dbReference type="HAMAP" id="MF_00131">
    <property type="entry name" value="Trp_synth_alpha"/>
    <property type="match status" value="1"/>
</dbReference>
<dbReference type="InterPro" id="IPR013785">
    <property type="entry name" value="Aldolase_TIM"/>
</dbReference>
<dbReference type="InterPro" id="IPR011060">
    <property type="entry name" value="RibuloseP-bd_barrel"/>
</dbReference>
<dbReference type="InterPro" id="IPR018204">
    <property type="entry name" value="Trp_synthase_alpha_AS"/>
</dbReference>
<dbReference type="InterPro" id="IPR002028">
    <property type="entry name" value="Trp_synthase_suA"/>
</dbReference>
<dbReference type="NCBIfam" id="NF009621">
    <property type="entry name" value="PRK13125.1"/>
    <property type="match status" value="1"/>
</dbReference>
<dbReference type="PANTHER" id="PTHR43406:SF1">
    <property type="entry name" value="TRYPTOPHAN SYNTHASE ALPHA CHAIN, CHLOROPLASTIC"/>
    <property type="match status" value="1"/>
</dbReference>
<dbReference type="PANTHER" id="PTHR43406">
    <property type="entry name" value="TRYPTOPHAN SYNTHASE, ALPHA CHAIN"/>
    <property type="match status" value="1"/>
</dbReference>
<dbReference type="Pfam" id="PF00290">
    <property type="entry name" value="Trp_syntA"/>
    <property type="match status" value="1"/>
</dbReference>
<dbReference type="SUPFAM" id="SSF51366">
    <property type="entry name" value="Ribulose-phoshate binding barrel"/>
    <property type="match status" value="1"/>
</dbReference>
<dbReference type="PROSITE" id="PS00167">
    <property type="entry name" value="TRP_SYNTHASE_ALPHA"/>
    <property type="match status" value="1"/>
</dbReference>
<organism>
    <name type="scientific">Saccharolobus solfataricus (strain ATCC 35092 / DSM 1617 / JCM 11322 / P2)</name>
    <name type="common">Sulfolobus solfataricus</name>
    <dbReference type="NCBI Taxonomy" id="273057"/>
    <lineage>
        <taxon>Archaea</taxon>
        <taxon>Thermoproteota</taxon>
        <taxon>Thermoprotei</taxon>
        <taxon>Sulfolobales</taxon>
        <taxon>Sulfolobaceae</taxon>
        <taxon>Saccharolobus</taxon>
    </lineage>
</organism>
<reference key="1">
    <citation type="submission" date="1995-07" db="EMBL/GenBank/DDBJ databases">
        <title>The tryptophan operon in Sulfolobus solfataricus.</title>
        <authorList>
            <person name="Tutino M.L."/>
            <person name="Cubellis M."/>
            <person name="Sannia G."/>
            <person name="Marino G."/>
        </authorList>
    </citation>
    <scope>NUCLEOTIDE SEQUENCE [GENOMIC DNA]</scope>
    <source>
        <strain>DSM 5833 / MT-4</strain>
    </source>
</reference>
<reference key="2">
    <citation type="journal article" date="2001" name="Proc. Natl. Acad. Sci. U.S.A.">
        <title>The complete genome of the crenarchaeon Sulfolobus solfataricus P2.</title>
        <authorList>
            <person name="She Q."/>
            <person name="Singh R.K."/>
            <person name="Confalonieri F."/>
            <person name="Zivanovic Y."/>
            <person name="Allard G."/>
            <person name="Awayez M.J."/>
            <person name="Chan-Weiher C.C.-Y."/>
            <person name="Clausen I.G."/>
            <person name="Curtis B.A."/>
            <person name="De Moors A."/>
            <person name="Erauso G."/>
            <person name="Fletcher C."/>
            <person name="Gordon P.M.K."/>
            <person name="Heikamp-de Jong I."/>
            <person name="Jeffries A.C."/>
            <person name="Kozera C.J."/>
            <person name="Medina N."/>
            <person name="Peng X."/>
            <person name="Thi-Ngoc H.P."/>
            <person name="Redder P."/>
            <person name="Schenk M.E."/>
            <person name="Theriault C."/>
            <person name="Tolstrup N."/>
            <person name="Charlebois R.L."/>
            <person name="Doolittle W.F."/>
            <person name="Duguet M."/>
            <person name="Gaasterland T."/>
            <person name="Garrett R.A."/>
            <person name="Ragan M.A."/>
            <person name="Sensen C.W."/>
            <person name="Van der Oost J."/>
        </authorList>
    </citation>
    <scope>NUCLEOTIDE SEQUENCE [LARGE SCALE GENOMIC DNA]</scope>
    <source>
        <strain>ATCC 35092 / DSM 1617 / JCM 11322 / P2</strain>
    </source>
</reference>
<gene>
    <name evidence="1" type="primary">trpA</name>
    <name type="ordered locus">SSO0889</name>
</gene>
<sequence>MEMGKMLVVYMTLGYPNVQSFKDFIIGAVENGADILELGIPPKYAKYDGPVIRKSYDKVKGLDIWPLIEDIRKDVGVPIIALTYLEDWVDQLENFLNMIKDVKLDGILFPDLLIDYIDDLDKIDGIIKNKGLKNVIFTSPSVPDLLIHKVSKISDLFLYYGVRPTTGVPIPVSVKQLINRVRNLVENKLIVGFGLSSESDLRDALSAGADGIAIGTVFIEEIERNGVKSAINLVKKFRAILDEYK</sequence>
<protein>
    <recommendedName>
        <fullName evidence="1">Tryptophan synthase alpha chain</fullName>
        <ecNumber evidence="1">4.2.1.20</ecNumber>
    </recommendedName>
</protein>
<feature type="chain" id="PRO_0000098900" description="Tryptophan synthase alpha chain">
    <location>
        <begin position="1"/>
        <end position="245"/>
    </location>
</feature>
<feature type="active site" description="Proton acceptor" evidence="1">
    <location>
        <position position="37"/>
    </location>
</feature>
<feature type="active site" description="Proton acceptor" evidence="1">
    <location>
        <position position="48"/>
    </location>
</feature>
<feature type="strand" evidence="3">
    <location>
        <begin position="6"/>
        <end position="12"/>
    </location>
</feature>
<feature type="helix" evidence="3">
    <location>
        <begin position="18"/>
        <end position="30"/>
    </location>
</feature>
<feature type="strand" evidence="3">
    <location>
        <begin position="35"/>
        <end position="39"/>
    </location>
</feature>
<feature type="helix" evidence="3">
    <location>
        <begin position="50"/>
        <end position="58"/>
    </location>
</feature>
<feature type="turn" evidence="3">
    <location>
        <begin position="59"/>
        <end position="61"/>
    </location>
</feature>
<feature type="helix" evidence="3">
    <location>
        <begin position="64"/>
        <end position="74"/>
    </location>
</feature>
<feature type="strand" evidence="3">
    <location>
        <begin position="79"/>
        <end position="82"/>
    </location>
</feature>
<feature type="helix" evidence="3">
    <location>
        <begin position="85"/>
        <end position="88"/>
    </location>
</feature>
<feature type="helix" evidence="4">
    <location>
        <begin position="89"/>
        <end position="91"/>
    </location>
</feature>
<feature type="helix" evidence="3">
    <location>
        <begin position="92"/>
        <end position="101"/>
    </location>
</feature>
<feature type="strand" evidence="3">
    <location>
        <begin position="106"/>
        <end position="108"/>
    </location>
</feature>
<feature type="helix" evidence="3">
    <location>
        <begin position="112"/>
        <end position="115"/>
    </location>
</feature>
<feature type="helix" evidence="3">
    <location>
        <begin position="117"/>
        <end position="119"/>
    </location>
</feature>
<feature type="helix" evidence="3">
    <location>
        <begin position="120"/>
        <end position="128"/>
    </location>
</feature>
<feature type="turn" evidence="3">
    <location>
        <begin position="129"/>
        <end position="131"/>
    </location>
</feature>
<feature type="helix" evidence="3">
    <location>
        <begin position="144"/>
        <end position="151"/>
    </location>
</feature>
<feature type="strand" evidence="3">
    <location>
        <begin position="158"/>
        <end position="163"/>
    </location>
</feature>
<feature type="strand" evidence="3">
    <location>
        <begin position="165"/>
        <end position="167"/>
    </location>
</feature>
<feature type="helix" evidence="3">
    <location>
        <begin position="174"/>
        <end position="182"/>
    </location>
</feature>
<feature type="strand" evidence="3">
    <location>
        <begin position="189"/>
        <end position="195"/>
    </location>
</feature>
<feature type="helix" evidence="3">
    <location>
        <begin position="198"/>
        <end position="206"/>
    </location>
</feature>
<feature type="strand" evidence="3">
    <location>
        <begin position="210"/>
        <end position="214"/>
    </location>
</feature>
<feature type="helix" evidence="3">
    <location>
        <begin position="216"/>
        <end position="225"/>
    </location>
</feature>
<feature type="helix" evidence="3">
    <location>
        <begin position="227"/>
        <end position="241"/>
    </location>
</feature>
<evidence type="ECO:0000255" key="1">
    <source>
        <dbReference type="HAMAP-Rule" id="MF_00131"/>
    </source>
</evidence>
<evidence type="ECO:0000305" key="2"/>
<evidence type="ECO:0007829" key="3">
    <source>
        <dbReference type="PDB" id="5N2P"/>
    </source>
</evidence>
<evidence type="ECO:0007829" key="4">
    <source>
        <dbReference type="PDB" id="6HUL"/>
    </source>
</evidence>